<protein>
    <recommendedName>
        <fullName>Crustacean hyperglycemic hormones B</fullName>
    </recommendedName>
    <alternativeName>
        <fullName>MeCHH-B</fullName>
        <shortName>CHH-B</shortName>
    </alternativeName>
    <component>
        <recommendedName>
            <fullName>CHH precursor-related peptide B</fullName>
            <shortName>CPRP B</shortName>
        </recommendedName>
    </component>
    <component>
        <recommendedName>
            <fullName>Crustacean hyperglycemic hormone B</fullName>
            <shortName>CHH B</shortName>
        </recommendedName>
    </component>
</protein>
<feature type="signal peptide" evidence="2">
    <location>
        <begin position="1"/>
        <end position="26"/>
    </location>
</feature>
<feature type="peptide" id="PRO_0000019045" description="CHH precursor-related peptide B">
    <location>
        <begin position="27"/>
        <end position="37"/>
    </location>
</feature>
<feature type="peptide" id="PRO_0000019046" description="Crustacean hyperglycemic hormone B">
    <location>
        <begin position="40"/>
        <end position="111"/>
    </location>
</feature>
<feature type="modified residue" description="Valine amide" evidence="1">
    <location>
        <position position="111"/>
    </location>
</feature>
<feature type="disulfide bond" evidence="1">
    <location>
        <begin position="46"/>
        <end position="82"/>
    </location>
</feature>
<feature type="disulfide bond" evidence="1">
    <location>
        <begin position="62"/>
        <end position="78"/>
    </location>
</feature>
<feature type="disulfide bond" evidence="1">
    <location>
        <begin position="65"/>
        <end position="91"/>
    </location>
</feature>
<sequence length="113" mass="12937">MVAFRMMSMALLVVVASSWWASPVEAASSPRVDHRLVRRSLFDPSCTGVFDRELLGRLNRVCDDCYNVFREPKVATECRSHCFLNPAFIQCLEYIIPEVLHEEYQANVQLVGK</sequence>
<accession>Q9NGP0</accession>
<keyword id="KW-0027">Amidation</keyword>
<keyword id="KW-0119">Carbohydrate metabolism</keyword>
<keyword id="KW-0165">Cleavage on pair of basic residues</keyword>
<keyword id="KW-1015">Disulfide bond</keyword>
<keyword id="KW-0313">Glucose metabolism</keyword>
<keyword id="KW-0372">Hormone</keyword>
<keyword id="KW-0527">Neuropeptide</keyword>
<keyword id="KW-0964">Secreted</keyword>
<keyword id="KW-0732">Signal</keyword>
<dbReference type="EMBL" id="AF247160">
    <property type="protein sequence ID" value="AAF63028.1"/>
    <property type="molecule type" value="mRNA"/>
</dbReference>
<dbReference type="SMR" id="Q9NGP0"/>
<dbReference type="GO" id="GO:0005576">
    <property type="term" value="C:extracellular region"/>
    <property type="evidence" value="ECO:0007669"/>
    <property type="project" value="UniProtKB-SubCell"/>
</dbReference>
<dbReference type="GO" id="GO:0005184">
    <property type="term" value="F:neuropeptide hormone activity"/>
    <property type="evidence" value="ECO:0007669"/>
    <property type="project" value="InterPro"/>
</dbReference>
<dbReference type="GO" id="GO:0007623">
    <property type="term" value="P:circadian rhythm"/>
    <property type="evidence" value="ECO:0007669"/>
    <property type="project" value="TreeGrafter"/>
</dbReference>
<dbReference type="GO" id="GO:0006006">
    <property type="term" value="P:glucose metabolic process"/>
    <property type="evidence" value="ECO:0007669"/>
    <property type="project" value="UniProtKB-KW"/>
</dbReference>
<dbReference type="GO" id="GO:0007218">
    <property type="term" value="P:neuropeptide signaling pathway"/>
    <property type="evidence" value="ECO:0007669"/>
    <property type="project" value="UniProtKB-KW"/>
</dbReference>
<dbReference type="Gene3D" id="1.10.2010.10">
    <property type="entry name" value="Crustacean CHH/MIH/GIH neurohormone"/>
    <property type="match status" value="1"/>
</dbReference>
<dbReference type="InterPro" id="IPR018251">
    <property type="entry name" value="Crust_neurhormone_CS"/>
</dbReference>
<dbReference type="InterPro" id="IPR031098">
    <property type="entry name" value="Crust_neurohorm"/>
</dbReference>
<dbReference type="InterPro" id="IPR035957">
    <property type="entry name" value="Crust_neurohorm_sf"/>
</dbReference>
<dbReference type="InterPro" id="IPR001166">
    <property type="entry name" value="Hyperglycemic"/>
</dbReference>
<dbReference type="InterPro" id="IPR000346">
    <property type="entry name" value="Hyperglycemic1"/>
</dbReference>
<dbReference type="PANTHER" id="PTHR35981">
    <property type="entry name" value="ION TRANSPORT PEPTIDE, ISOFORM C"/>
    <property type="match status" value="1"/>
</dbReference>
<dbReference type="PANTHER" id="PTHR35981:SF2">
    <property type="entry name" value="ION TRANSPORT PEPTIDE, ISOFORM C"/>
    <property type="match status" value="1"/>
</dbReference>
<dbReference type="Pfam" id="PF01147">
    <property type="entry name" value="Crust_neurohorm"/>
    <property type="match status" value="1"/>
</dbReference>
<dbReference type="PRINTS" id="PR00548">
    <property type="entry name" value="HYPRGLYCEMC1"/>
</dbReference>
<dbReference type="PRINTS" id="PR00550">
    <property type="entry name" value="HYPRGLYCEMIC"/>
</dbReference>
<dbReference type="SUPFAM" id="SSF81778">
    <property type="entry name" value="Crustacean CHH/MIH/GIH neurohormone"/>
    <property type="match status" value="1"/>
</dbReference>
<dbReference type="PROSITE" id="PS01250">
    <property type="entry name" value="CHH_MIH_GIH"/>
    <property type="match status" value="1"/>
</dbReference>
<comment type="function">
    <text evidence="1">Hormone found in the sinus gland of isopods and decapods which controls the blood sugar level. Has a secretagogue action over the amylase released from the midgut gland. May act as a stress hormone and may be involved in the control of molting and reproduction (By similarity).</text>
</comment>
<comment type="subcellular location">
    <subcellularLocation>
        <location>Secreted</location>
    </subcellularLocation>
</comment>
<comment type="tissue specificity">
    <text>Expressed at a constant level in the eyestalks of juveniles and mature females. A low level expression is seen in the central nervous system.</text>
</comment>
<comment type="similarity">
    <text evidence="3">Belongs to the arthropod CHH/MIH/GIH/VIH hormone family.</text>
</comment>
<reference key="1">
    <citation type="journal article" date="2000" name="FEBS Lett.">
        <title>Molecular characterization of an additional shrimp hyperglycemic hormone: cDNA cloning, gene organization, expression and biological assay of recombinant proteins.</title>
        <authorList>
            <person name="Gu P.-L."/>
            <person name="Yu K.L."/>
            <person name="Chan S.-M."/>
        </authorList>
    </citation>
    <scope>NUCLEOTIDE SEQUENCE [MRNA]</scope>
</reference>
<proteinExistence type="evidence at transcript level"/>
<name>CHHB_METEN</name>
<organism>
    <name type="scientific">Metapenaeus ensis</name>
    <name type="common">Greasyback shrimp</name>
    <name type="synonym">Penaeus ensis</name>
    <dbReference type="NCBI Taxonomy" id="32278"/>
    <lineage>
        <taxon>Eukaryota</taxon>
        <taxon>Metazoa</taxon>
        <taxon>Ecdysozoa</taxon>
        <taxon>Arthropoda</taxon>
        <taxon>Crustacea</taxon>
        <taxon>Multicrustacea</taxon>
        <taxon>Malacostraca</taxon>
        <taxon>Eumalacostraca</taxon>
        <taxon>Eucarida</taxon>
        <taxon>Decapoda</taxon>
        <taxon>Dendrobranchiata</taxon>
        <taxon>Penaeoidea</taxon>
        <taxon>Penaeidae</taxon>
        <taxon>Metapenaeus</taxon>
    </lineage>
</organism>
<evidence type="ECO:0000250" key="1"/>
<evidence type="ECO:0000255" key="2"/>
<evidence type="ECO:0000305" key="3"/>